<proteinExistence type="inferred from homology"/>
<name>ATPD_HELHP</name>
<dbReference type="EMBL" id="AE017125">
    <property type="protein sequence ID" value="AAP77023.1"/>
    <property type="molecule type" value="Genomic_DNA"/>
</dbReference>
<dbReference type="RefSeq" id="WP_011115268.1">
    <property type="nucleotide sequence ID" value="NC_004917.1"/>
</dbReference>
<dbReference type="SMR" id="Q7VJ24"/>
<dbReference type="STRING" id="235279.HH_0426"/>
<dbReference type="KEGG" id="hhe:HH_0426"/>
<dbReference type="eggNOG" id="COG0712">
    <property type="taxonomic scope" value="Bacteria"/>
</dbReference>
<dbReference type="HOGENOM" id="CLU_085114_3_1_7"/>
<dbReference type="OrthoDB" id="5339308at2"/>
<dbReference type="Proteomes" id="UP000002495">
    <property type="component" value="Chromosome"/>
</dbReference>
<dbReference type="GO" id="GO:0005886">
    <property type="term" value="C:plasma membrane"/>
    <property type="evidence" value="ECO:0007669"/>
    <property type="project" value="UniProtKB-SubCell"/>
</dbReference>
<dbReference type="GO" id="GO:0045259">
    <property type="term" value="C:proton-transporting ATP synthase complex"/>
    <property type="evidence" value="ECO:0007669"/>
    <property type="project" value="UniProtKB-KW"/>
</dbReference>
<dbReference type="GO" id="GO:0046933">
    <property type="term" value="F:proton-transporting ATP synthase activity, rotational mechanism"/>
    <property type="evidence" value="ECO:0007669"/>
    <property type="project" value="UniProtKB-UniRule"/>
</dbReference>
<dbReference type="Gene3D" id="1.10.520.20">
    <property type="entry name" value="N-terminal domain of the delta subunit of the F1F0-ATP synthase"/>
    <property type="match status" value="1"/>
</dbReference>
<dbReference type="HAMAP" id="MF_01416">
    <property type="entry name" value="ATP_synth_delta_bact"/>
    <property type="match status" value="1"/>
</dbReference>
<dbReference type="InterPro" id="IPR026015">
    <property type="entry name" value="ATP_synth_OSCP/delta_N_sf"/>
</dbReference>
<dbReference type="InterPro" id="IPR000711">
    <property type="entry name" value="ATPase_OSCP/dsu"/>
</dbReference>
<dbReference type="NCBIfam" id="NF006291">
    <property type="entry name" value="PRK08474.1"/>
    <property type="match status" value="1"/>
</dbReference>
<dbReference type="PANTHER" id="PTHR11910">
    <property type="entry name" value="ATP SYNTHASE DELTA CHAIN"/>
    <property type="match status" value="1"/>
</dbReference>
<dbReference type="Pfam" id="PF00213">
    <property type="entry name" value="OSCP"/>
    <property type="match status" value="1"/>
</dbReference>
<dbReference type="SUPFAM" id="SSF47928">
    <property type="entry name" value="N-terminal domain of the delta subunit of the F1F0-ATP synthase"/>
    <property type="match status" value="1"/>
</dbReference>
<reference key="1">
    <citation type="journal article" date="2003" name="Proc. Natl. Acad. Sci. U.S.A.">
        <title>The complete genome sequence of the carcinogenic bacterium Helicobacter hepaticus.</title>
        <authorList>
            <person name="Suerbaum S."/>
            <person name="Josenhans C."/>
            <person name="Sterzenbach T."/>
            <person name="Drescher B."/>
            <person name="Brandt P."/>
            <person name="Bell M."/>
            <person name="Droege M."/>
            <person name="Fartmann B."/>
            <person name="Fischer H.-P."/>
            <person name="Ge Z."/>
            <person name="Hoerster A."/>
            <person name="Holland R."/>
            <person name="Klein K."/>
            <person name="Koenig J."/>
            <person name="Macko L."/>
            <person name="Mendz G.L."/>
            <person name="Nyakatura G."/>
            <person name="Schauer D.B."/>
            <person name="Shen Z."/>
            <person name="Weber J."/>
            <person name="Frosch M."/>
            <person name="Fox J.G."/>
        </authorList>
    </citation>
    <scope>NUCLEOTIDE SEQUENCE [LARGE SCALE GENOMIC DNA]</scope>
    <source>
        <strain>ATCC 51449 / 3B1</strain>
    </source>
</reference>
<protein>
    <recommendedName>
        <fullName evidence="1">ATP synthase subunit delta</fullName>
    </recommendedName>
    <alternativeName>
        <fullName evidence="1">ATP synthase F(1) sector subunit delta</fullName>
    </alternativeName>
    <alternativeName>
        <fullName evidence="1">F-type ATPase subunit delta</fullName>
        <shortName evidence="1">F-ATPase subunit delta</shortName>
    </alternativeName>
</protein>
<organism>
    <name type="scientific">Helicobacter hepaticus (strain ATCC 51449 / 3B1)</name>
    <dbReference type="NCBI Taxonomy" id="235279"/>
    <lineage>
        <taxon>Bacteria</taxon>
        <taxon>Pseudomonadati</taxon>
        <taxon>Campylobacterota</taxon>
        <taxon>Epsilonproteobacteria</taxon>
        <taxon>Campylobacterales</taxon>
        <taxon>Helicobacteraceae</taxon>
        <taxon>Helicobacter</taxon>
    </lineage>
</organism>
<feature type="chain" id="PRO_0000382103" description="ATP synthase subunit delta">
    <location>
        <begin position="1"/>
        <end position="174"/>
    </location>
</feature>
<comment type="function">
    <text evidence="1">F(1)F(0) ATP synthase produces ATP from ADP in the presence of a proton or sodium gradient. F-type ATPases consist of two structural domains, F(1) containing the extramembraneous catalytic core and F(0) containing the membrane proton channel, linked together by a central stalk and a peripheral stalk. During catalysis, ATP synthesis in the catalytic domain of F(1) is coupled via a rotary mechanism of the central stalk subunits to proton translocation.</text>
</comment>
<comment type="function">
    <text evidence="1">This protein is part of the stalk that links CF(0) to CF(1). It either transmits conformational changes from CF(0) to CF(1) or is implicated in proton conduction.</text>
</comment>
<comment type="subunit">
    <text evidence="1">F-type ATPases have 2 components, F(1) - the catalytic core - and F(0) - the membrane proton channel. F(1) has five subunits: alpha(3), beta(3), gamma(1), delta(1), epsilon(1). F(0) has three main subunits: a(1), b(2) and c(10-14). The alpha and beta chains form an alternating ring which encloses part of the gamma chain. F(1) is attached to F(0) by a central stalk formed by the gamma and epsilon chains, while a peripheral stalk is formed by the delta and b chains.</text>
</comment>
<comment type="subcellular location">
    <subcellularLocation>
        <location evidence="1">Cell inner membrane</location>
        <topology evidence="1">Peripheral membrane protein</topology>
    </subcellularLocation>
</comment>
<comment type="similarity">
    <text evidence="1">Belongs to the ATPase delta chain family.</text>
</comment>
<keyword id="KW-0066">ATP synthesis</keyword>
<keyword id="KW-0997">Cell inner membrane</keyword>
<keyword id="KW-1003">Cell membrane</keyword>
<keyword id="KW-0139">CF(1)</keyword>
<keyword id="KW-0375">Hydrogen ion transport</keyword>
<keyword id="KW-0406">Ion transport</keyword>
<keyword id="KW-0472">Membrane</keyword>
<keyword id="KW-1185">Reference proteome</keyword>
<keyword id="KW-0813">Transport</keyword>
<sequence length="174" mass="19695">MFNIISKKYTQALVDSGSNLDETLSILKGLSLALKDKRNADIIASPFLSKTQKEQFLLESVGKVDMKLQNFFRLLAQSDRILLIPYISDELERRLLARKKEYAATLTAKESLDTKTLEKIQDSLAKKLGVKLSIKQRLSEVDGIKLSVEDLGIEVSFSKERFSNDLKHHILKAL</sequence>
<evidence type="ECO:0000255" key="1">
    <source>
        <dbReference type="HAMAP-Rule" id="MF_01416"/>
    </source>
</evidence>
<gene>
    <name evidence="1" type="primary">atpH</name>
    <name type="ordered locus">HH_0426</name>
</gene>
<accession>Q7VJ24</accession>